<comment type="function">
    <text evidence="1 4 6 7">Orphan receptor that binds DNA as a monomer to hormone response elements (HRE) containing an extended core motif half-site sequence 5'-AAGGTCA-3' in which the 5' flanking nucleotides participate in determining receptor specificity (By similarity). Regulates cell cycle progression in neural stem cells of rhe developing brain. Involved in the regulation of retinal development and essential for vision. During retinogenesis, regulates PTEN-Cyclin D expression via binding to the promoter region of PTEN and suppressing its activity. May be involved in retinoic acid receptor (RAR) regulation in retinal cells.</text>
</comment>
<comment type="subunit">
    <text evidence="1 6">Monomer (By similarity). Interacts with ATN1; the interaction represses the transcription.</text>
</comment>
<comment type="interaction">
    <interactant intactId="EBI-15658561">
        <id>Q64104</id>
    </interactant>
    <interactant intactId="EBI-302263">
        <id>O88895</id>
        <label>Hdac3</label>
    </interactant>
    <organismsDiffer>false</organismsDiffer>
    <experiments>2</experiments>
</comment>
<comment type="interaction">
    <interactant intactId="EBI-15658561">
        <id>Q64104</id>
    </interactant>
    <interactant intactId="EBI-645339">
        <id>Q9Z2V6</id>
        <label>Hdac5</label>
    </interactant>
    <organismsDiffer>false</organismsDiffer>
    <experiments>3</experiments>
</comment>
<comment type="subcellular location">
    <subcellularLocation>
        <location evidence="2 7">Nucleus</location>
    </subcellularLocation>
</comment>
<comment type="tissue specificity">
    <text evidence="8">Expressed in embryonic developing forebrain and in dorsal midbrain. Outside the neural epithelium only found in the surface ectoderm at the site of nasal placode formation, where subsequently the nasal and olfactory epithelium is formed. Also expressed in adult brain.</text>
</comment>
<comment type="developmental stage">
    <text evidence="7 8">Expression is first detected on 8 dpc and increases until 13.5 dpc, then sharply decreases from day 13 dpc until 18 dpc. Expression is barely detected in newborn brains but increases again after birth. Highly expressed in the retinal neuroblastic layer during the early stages of retinogenesis. Down-regulated during neuronal development. At 14.5 dpc, expressed in the periventricular neural stem cells of the brain.</text>
</comment>
<comment type="disruption phenotype">
    <text evidence="4 5 6 7">Mice show exhibit hyperaggressivity, decreased body fat and have ocular defects. Female mice lack maternal instincts. In developing brain, there are reduced areas of the ventricular zone and enlarged ventricles. Neuron progenitor cell divide more slowly. There is complete loss of visual acuity, with mice not being able to distinguish the cliff nor light and dark transition. There is a dramatic reduction in retina thickness and enhanced generation of S-cones with more differentiated neurons, fewer proliferation retinal progenitor cells (RPCs) and more cells undergoing apoptosis leading to progressive retinal dystrophy, optic nerve degradation and blindness.</text>
</comment>
<comment type="similarity">
    <text evidence="9">Belongs to the nuclear hormone receptor family. NR2 subfamily.</text>
</comment>
<feature type="chain" id="PRO_0000053593" description="Nuclear receptor subfamily 2 group E member 1">
    <location>
        <begin position="1"/>
        <end position="385"/>
    </location>
</feature>
<feature type="domain" description="NR LBD" evidence="3">
    <location>
        <begin position="155"/>
        <end position="383"/>
    </location>
</feature>
<feature type="DNA-binding region" description="Nuclear receptor" evidence="2">
    <location>
        <begin position="13"/>
        <end position="90"/>
    </location>
</feature>
<feature type="zinc finger region" description="NR C4-type" evidence="2">
    <location>
        <begin position="16"/>
        <end position="36"/>
    </location>
</feature>
<feature type="zinc finger region" description="NR C4-type" evidence="2">
    <location>
        <begin position="52"/>
        <end position="78"/>
    </location>
</feature>
<feature type="region of interest" description="Required for transcriptional repression">
    <location>
        <begin position="341"/>
        <end position="385"/>
    </location>
</feature>
<accession>Q64104</accession>
<proteinExistence type="evidence at protein level"/>
<organism>
    <name type="scientific">Mus musculus</name>
    <name type="common">Mouse</name>
    <dbReference type="NCBI Taxonomy" id="10090"/>
    <lineage>
        <taxon>Eukaryota</taxon>
        <taxon>Metazoa</taxon>
        <taxon>Chordata</taxon>
        <taxon>Craniata</taxon>
        <taxon>Vertebrata</taxon>
        <taxon>Euteleostomi</taxon>
        <taxon>Mammalia</taxon>
        <taxon>Eutheria</taxon>
        <taxon>Euarchontoglires</taxon>
        <taxon>Glires</taxon>
        <taxon>Rodentia</taxon>
        <taxon>Myomorpha</taxon>
        <taxon>Muroidea</taxon>
        <taxon>Muridae</taxon>
        <taxon>Murinae</taxon>
        <taxon>Mus</taxon>
        <taxon>Mus</taxon>
    </lineage>
</organism>
<protein>
    <recommendedName>
        <fullName>Nuclear receptor subfamily 2 group E member 1</fullName>
    </recommendedName>
    <alternativeName>
        <fullName>Nuclear receptor TLX</fullName>
    </alternativeName>
    <alternativeName>
        <fullName>Protein tailless homolog</fullName>
        <shortName>Tll</shortName>
        <shortName>mTll</shortName>
    </alternativeName>
</protein>
<dbReference type="EMBL" id="S77482">
    <property type="protein sequence ID" value="AAB34090.1"/>
    <property type="molecule type" value="mRNA"/>
</dbReference>
<dbReference type="EMBL" id="BC057104">
    <property type="protein sequence ID" value="AAH57104.1"/>
    <property type="molecule type" value="mRNA"/>
</dbReference>
<dbReference type="CCDS" id="CCDS23813.1"/>
<dbReference type="RefSeq" id="NP_689415.1">
    <property type="nucleotide sequence ID" value="NM_152229.3"/>
</dbReference>
<dbReference type="SMR" id="Q64104"/>
<dbReference type="BioGRID" id="204227">
    <property type="interactions" value="3"/>
</dbReference>
<dbReference type="DIP" id="DIP-46432N"/>
<dbReference type="FunCoup" id="Q64104">
    <property type="interactions" value="1947"/>
</dbReference>
<dbReference type="IntAct" id="Q64104">
    <property type="interactions" value="4"/>
</dbReference>
<dbReference type="STRING" id="10090.ENSMUSP00000019938"/>
<dbReference type="iPTMnet" id="Q64104"/>
<dbReference type="PhosphoSitePlus" id="Q64104"/>
<dbReference type="PaxDb" id="10090-ENSMUSP00000019938"/>
<dbReference type="ProteomicsDB" id="293967"/>
<dbReference type="Antibodypedia" id="19108">
    <property type="antibodies" value="303 antibodies from 33 providers"/>
</dbReference>
<dbReference type="DNASU" id="21907"/>
<dbReference type="Ensembl" id="ENSMUST00000019938.11">
    <property type="protein sequence ID" value="ENSMUSP00000019938.5"/>
    <property type="gene ID" value="ENSMUSG00000019803.12"/>
</dbReference>
<dbReference type="GeneID" id="21907"/>
<dbReference type="KEGG" id="mmu:21907"/>
<dbReference type="UCSC" id="uc007eyt.1">
    <property type="organism name" value="mouse"/>
</dbReference>
<dbReference type="AGR" id="MGI:1100526"/>
<dbReference type="CTD" id="7101"/>
<dbReference type="MGI" id="MGI:1100526">
    <property type="gene designation" value="Nr2e1"/>
</dbReference>
<dbReference type="VEuPathDB" id="HostDB:ENSMUSG00000019803"/>
<dbReference type="eggNOG" id="KOG3575">
    <property type="taxonomic scope" value="Eukaryota"/>
</dbReference>
<dbReference type="GeneTree" id="ENSGT00940000156693"/>
<dbReference type="HOGENOM" id="CLU_007368_20_3_1"/>
<dbReference type="InParanoid" id="Q64104"/>
<dbReference type="OMA" id="IMGMVTR"/>
<dbReference type="OrthoDB" id="10045640at2759"/>
<dbReference type="PhylomeDB" id="Q64104"/>
<dbReference type="TreeFam" id="TF315716"/>
<dbReference type="Reactome" id="R-MMU-383280">
    <property type="pathway name" value="Nuclear Receptor transcription pathway"/>
</dbReference>
<dbReference type="BioGRID-ORCS" id="21907">
    <property type="hits" value="3 hits in 81 CRISPR screens"/>
</dbReference>
<dbReference type="ChiTaRS" id="Nr2e1">
    <property type="organism name" value="mouse"/>
</dbReference>
<dbReference type="PRO" id="PR:Q64104"/>
<dbReference type="Proteomes" id="UP000000589">
    <property type="component" value="Chromosome 10"/>
</dbReference>
<dbReference type="RNAct" id="Q64104">
    <property type="molecule type" value="protein"/>
</dbReference>
<dbReference type="Bgee" id="ENSMUSG00000019803">
    <property type="expression patterns" value="Expressed in animal zygote and 70 other cell types or tissues"/>
</dbReference>
<dbReference type="ExpressionAtlas" id="Q64104">
    <property type="expression patterns" value="baseline and differential"/>
</dbReference>
<dbReference type="GO" id="GO:0005654">
    <property type="term" value="C:nucleoplasm"/>
    <property type="evidence" value="ECO:0000304"/>
    <property type="project" value="Reactome"/>
</dbReference>
<dbReference type="GO" id="GO:0005634">
    <property type="term" value="C:nucleus"/>
    <property type="evidence" value="ECO:0000314"/>
    <property type="project" value="MGI"/>
</dbReference>
<dbReference type="GO" id="GO:0001228">
    <property type="term" value="F:DNA-binding transcription activator activity, RNA polymerase II-specific"/>
    <property type="evidence" value="ECO:0000314"/>
    <property type="project" value="MGI"/>
</dbReference>
<dbReference type="GO" id="GO:0001227">
    <property type="term" value="F:DNA-binding transcription repressor activity, RNA polymerase II-specific"/>
    <property type="evidence" value="ECO:0000314"/>
    <property type="project" value="MGI"/>
</dbReference>
<dbReference type="GO" id="GO:0019899">
    <property type="term" value="F:enzyme binding"/>
    <property type="evidence" value="ECO:0000353"/>
    <property type="project" value="BHF-UCL"/>
</dbReference>
<dbReference type="GO" id="GO:0042826">
    <property type="term" value="F:histone deacetylase binding"/>
    <property type="evidence" value="ECO:0000353"/>
    <property type="project" value="BHF-UCL"/>
</dbReference>
<dbReference type="GO" id="GO:0000978">
    <property type="term" value="F:RNA polymerase II cis-regulatory region sequence-specific DNA binding"/>
    <property type="evidence" value="ECO:0000314"/>
    <property type="project" value="MGI"/>
</dbReference>
<dbReference type="GO" id="GO:0008270">
    <property type="term" value="F:zinc ion binding"/>
    <property type="evidence" value="ECO:0007669"/>
    <property type="project" value="UniProtKB-KW"/>
</dbReference>
<dbReference type="GO" id="GO:0002118">
    <property type="term" value="P:aggressive behavior"/>
    <property type="evidence" value="ECO:0000315"/>
    <property type="project" value="MGI"/>
</dbReference>
<dbReference type="GO" id="GO:0021764">
    <property type="term" value="P:amygdala development"/>
    <property type="evidence" value="ECO:0000315"/>
    <property type="project" value="MGI"/>
</dbReference>
<dbReference type="GO" id="GO:0001525">
    <property type="term" value="P:angiogenesis"/>
    <property type="evidence" value="ECO:0000315"/>
    <property type="project" value="MGI"/>
</dbReference>
<dbReference type="GO" id="GO:0021960">
    <property type="term" value="P:anterior commissure morphogenesis"/>
    <property type="evidence" value="ECO:0000315"/>
    <property type="project" value="MGI"/>
</dbReference>
<dbReference type="GO" id="GO:0006915">
    <property type="term" value="P:apoptotic process"/>
    <property type="evidence" value="ECO:0000315"/>
    <property type="project" value="MGI"/>
</dbReference>
<dbReference type="GO" id="GO:0043615">
    <property type="term" value="P:astrocyte cell migration"/>
    <property type="evidence" value="ECO:0000315"/>
    <property type="project" value="MGI"/>
</dbReference>
<dbReference type="GO" id="GO:0048708">
    <property type="term" value="P:astrocyte differentiation"/>
    <property type="evidence" value="ECO:0000315"/>
    <property type="project" value="MGI"/>
</dbReference>
<dbReference type="GO" id="GO:0001662">
    <property type="term" value="P:behavioral fear response"/>
    <property type="evidence" value="ECO:0000315"/>
    <property type="project" value="MGI"/>
</dbReference>
<dbReference type="GO" id="GO:0007420">
    <property type="term" value="P:brain development"/>
    <property type="evidence" value="ECO:0000315"/>
    <property type="project" value="MGI"/>
</dbReference>
<dbReference type="GO" id="GO:0043010">
    <property type="term" value="P:camera-type eye development"/>
    <property type="evidence" value="ECO:0000315"/>
    <property type="project" value="MGI"/>
</dbReference>
<dbReference type="GO" id="GO:0045165">
    <property type="term" value="P:cell fate commitment"/>
    <property type="evidence" value="ECO:0000316"/>
    <property type="project" value="MGI"/>
</dbReference>
<dbReference type="GO" id="GO:0008283">
    <property type="term" value="P:cell population proliferation"/>
    <property type="evidence" value="ECO:0000315"/>
    <property type="project" value="MGI"/>
</dbReference>
<dbReference type="GO" id="GO:0021953">
    <property type="term" value="P:central nervous system neuron differentiation"/>
    <property type="evidence" value="ECO:0000315"/>
    <property type="project" value="MGI"/>
</dbReference>
<dbReference type="GO" id="GO:0021987">
    <property type="term" value="P:cerebral cortex development"/>
    <property type="evidence" value="ECO:0000315"/>
    <property type="project" value="MGI"/>
</dbReference>
<dbReference type="GO" id="GO:0021895">
    <property type="term" value="P:cerebral cortex neuron differentiation"/>
    <property type="evidence" value="ECO:0000315"/>
    <property type="project" value="MGI"/>
</dbReference>
<dbReference type="GO" id="GO:0021542">
    <property type="term" value="P:dentate gyrus development"/>
    <property type="evidence" value="ECO:0000315"/>
    <property type="project" value="MGI"/>
</dbReference>
<dbReference type="GO" id="GO:0030198">
    <property type="term" value="P:extracellular matrix organization"/>
    <property type="evidence" value="ECO:0000315"/>
    <property type="project" value="MGI"/>
</dbReference>
<dbReference type="GO" id="GO:0021872">
    <property type="term" value="P:forebrain generation of neurons"/>
    <property type="evidence" value="ECO:0000315"/>
    <property type="project" value="MGI"/>
</dbReference>
<dbReference type="GO" id="GO:0021819">
    <property type="term" value="P:layer formation in cerebral cortex"/>
    <property type="evidence" value="ECO:0000315"/>
    <property type="project" value="MGI"/>
</dbReference>
<dbReference type="GO" id="GO:0060291">
    <property type="term" value="P:long-term synaptic potentiation"/>
    <property type="evidence" value="ECO:0000315"/>
    <property type="project" value="MGI"/>
</dbReference>
<dbReference type="GO" id="GO:0043066">
    <property type="term" value="P:negative regulation of apoptotic process"/>
    <property type="evidence" value="ECO:0000315"/>
    <property type="project" value="MGI"/>
</dbReference>
<dbReference type="GO" id="GO:0048712">
    <property type="term" value="P:negative regulation of astrocyte differentiation"/>
    <property type="evidence" value="ECO:0000315"/>
    <property type="project" value="MGI"/>
</dbReference>
<dbReference type="GO" id="GO:2000178">
    <property type="term" value="P:negative regulation of neural precursor cell proliferation"/>
    <property type="evidence" value="ECO:0000315"/>
    <property type="project" value="MGI"/>
</dbReference>
<dbReference type="GO" id="GO:0045665">
    <property type="term" value="P:negative regulation of neuron differentiation"/>
    <property type="evidence" value="ECO:0000315"/>
    <property type="project" value="MGI"/>
</dbReference>
<dbReference type="GO" id="GO:0000122">
    <property type="term" value="P:negative regulation of transcription by RNA polymerase II"/>
    <property type="evidence" value="ECO:0000314"/>
    <property type="project" value="MGI"/>
</dbReference>
<dbReference type="GO" id="GO:0061351">
    <property type="term" value="P:neural precursor cell proliferation"/>
    <property type="evidence" value="ECO:0000315"/>
    <property type="project" value="MGI"/>
</dbReference>
<dbReference type="GO" id="GO:0007405">
    <property type="term" value="P:neuroblast proliferation"/>
    <property type="evidence" value="ECO:0000315"/>
    <property type="project" value="MGI"/>
</dbReference>
<dbReference type="GO" id="GO:0021772">
    <property type="term" value="P:olfactory bulb development"/>
    <property type="evidence" value="ECO:0000315"/>
    <property type="project" value="MGI"/>
</dbReference>
<dbReference type="GO" id="GO:0045766">
    <property type="term" value="P:positive regulation of angiogenesis"/>
    <property type="evidence" value="ECO:0000315"/>
    <property type="project" value="MGI"/>
</dbReference>
<dbReference type="GO" id="GO:0045787">
    <property type="term" value="P:positive regulation of cell cycle"/>
    <property type="evidence" value="ECO:0000315"/>
    <property type="project" value="MGI"/>
</dbReference>
<dbReference type="GO" id="GO:0008284">
    <property type="term" value="P:positive regulation of cell population proliferation"/>
    <property type="evidence" value="ECO:0000315"/>
    <property type="project" value="MGI"/>
</dbReference>
<dbReference type="GO" id="GO:2000179">
    <property type="term" value="P:positive regulation of neural precursor cell proliferation"/>
    <property type="evidence" value="ECO:0000315"/>
    <property type="project" value="BHF-UCL"/>
</dbReference>
<dbReference type="GO" id="GO:0002052">
    <property type="term" value="P:positive regulation of neuroblast proliferation"/>
    <property type="evidence" value="ECO:0000315"/>
    <property type="project" value="MGI"/>
</dbReference>
<dbReference type="GO" id="GO:2000648">
    <property type="term" value="P:positive regulation of stem cell proliferation"/>
    <property type="evidence" value="ECO:0000315"/>
    <property type="project" value="BHF-UCL"/>
</dbReference>
<dbReference type="GO" id="GO:0090049">
    <property type="term" value="P:regulation of cell migration involved in sprouting angiogenesis"/>
    <property type="evidence" value="ECO:0000315"/>
    <property type="project" value="MGI"/>
</dbReference>
<dbReference type="GO" id="GO:0051128">
    <property type="term" value="P:regulation of cellular component organization"/>
    <property type="evidence" value="ECO:0000315"/>
    <property type="project" value="MGI"/>
</dbReference>
<dbReference type="GO" id="GO:0048814">
    <property type="term" value="P:regulation of dendrite morphogenesis"/>
    <property type="evidence" value="ECO:0000315"/>
    <property type="project" value="MGI"/>
</dbReference>
<dbReference type="GO" id="GO:0060164">
    <property type="term" value="P:regulation of timing of neuron differentiation"/>
    <property type="evidence" value="ECO:0000315"/>
    <property type="project" value="MGI"/>
</dbReference>
<dbReference type="GO" id="GO:0060041">
    <property type="term" value="P:retina development in camera-type eye"/>
    <property type="evidence" value="ECO:0000315"/>
    <property type="project" value="MGI"/>
</dbReference>
<dbReference type="GO" id="GO:0035176">
    <property type="term" value="P:social behavior"/>
    <property type="evidence" value="ECO:0000315"/>
    <property type="project" value="MGI"/>
</dbReference>
<dbReference type="GO" id="GO:0035019">
    <property type="term" value="P:somatic stem cell population maintenance"/>
    <property type="evidence" value="ECO:0000315"/>
    <property type="project" value="MGI"/>
</dbReference>
<dbReference type="GO" id="GO:0007601">
    <property type="term" value="P:visual perception"/>
    <property type="evidence" value="ECO:0000315"/>
    <property type="project" value="MGI"/>
</dbReference>
<dbReference type="CDD" id="cd07163">
    <property type="entry name" value="NR_DBD_TLX"/>
    <property type="match status" value="1"/>
</dbReference>
<dbReference type="CDD" id="cd06950">
    <property type="entry name" value="NR_LBD_Tlx_PNR_like"/>
    <property type="match status" value="1"/>
</dbReference>
<dbReference type="FunFam" id="3.30.50.10:FF:000019">
    <property type="entry name" value="Nuclear receptor subfamily 2 group E member"/>
    <property type="match status" value="1"/>
</dbReference>
<dbReference type="FunFam" id="1.10.565.10:FF:000019">
    <property type="entry name" value="Nuclear receptor subfamily 2 group E member 1"/>
    <property type="match status" value="1"/>
</dbReference>
<dbReference type="Gene3D" id="3.30.50.10">
    <property type="entry name" value="Erythroid Transcription Factor GATA-1, subunit A"/>
    <property type="match status" value="1"/>
</dbReference>
<dbReference type="Gene3D" id="1.10.565.10">
    <property type="entry name" value="Retinoid X Receptor"/>
    <property type="match status" value="1"/>
</dbReference>
<dbReference type="InterPro" id="IPR035500">
    <property type="entry name" value="NHR-like_dom_sf"/>
</dbReference>
<dbReference type="InterPro" id="IPR000536">
    <property type="entry name" value="Nucl_hrmn_rcpt_lig-bd"/>
</dbReference>
<dbReference type="InterPro" id="IPR050274">
    <property type="entry name" value="Nuclear_hormone_rcpt_NR2"/>
</dbReference>
<dbReference type="InterPro" id="IPR001723">
    <property type="entry name" value="Nuclear_hrmn_rcpt"/>
</dbReference>
<dbReference type="InterPro" id="IPR001628">
    <property type="entry name" value="Znf_hrmn_rcpt"/>
</dbReference>
<dbReference type="InterPro" id="IPR013088">
    <property type="entry name" value="Znf_NHR/GATA"/>
</dbReference>
<dbReference type="PANTHER" id="PTHR24083">
    <property type="entry name" value="NUCLEAR HORMONE RECEPTOR"/>
    <property type="match status" value="1"/>
</dbReference>
<dbReference type="Pfam" id="PF00104">
    <property type="entry name" value="Hormone_recep"/>
    <property type="match status" value="1"/>
</dbReference>
<dbReference type="Pfam" id="PF00105">
    <property type="entry name" value="zf-C4"/>
    <property type="match status" value="1"/>
</dbReference>
<dbReference type="PRINTS" id="PR00398">
    <property type="entry name" value="STRDHORMONER"/>
</dbReference>
<dbReference type="PRINTS" id="PR00047">
    <property type="entry name" value="STROIDFINGER"/>
</dbReference>
<dbReference type="SMART" id="SM00430">
    <property type="entry name" value="HOLI"/>
    <property type="match status" value="1"/>
</dbReference>
<dbReference type="SMART" id="SM00399">
    <property type="entry name" value="ZnF_C4"/>
    <property type="match status" value="1"/>
</dbReference>
<dbReference type="SUPFAM" id="SSF57716">
    <property type="entry name" value="Glucocorticoid receptor-like (DNA-binding domain)"/>
    <property type="match status" value="1"/>
</dbReference>
<dbReference type="SUPFAM" id="SSF48508">
    <property type="entry name" value="Nuclear receptor ligand-binding domain"/>
    <property type="match status" value="1"/>
</dbReference>
<dbReference type="PROSITE" id="PS51843">
    <property type="entry name" value="NR_LBD"/>
    <property type="match status" value="1"/>
</dbReference>
<dbReference type="PROSITE" id="PS00031">
    <property type="entry name" value="NUCLEAR_REC_DBD_1"/>
    <property type="match status" value="1"/>
</dbReference>
<dbReference type="PROSITE" id="PS51030">
    <property type="entry name" value="NUCLEAR_REC_DBD_2"/>
    <property type="match status" value="1"/>
</dbReference>
<keyword id="KW-0010">Activator</keyword>
<keyword id="KW-0217">Developmental protein</keyword>
<keyword id="KW-0238">DNA-binding</keyword>
<keyword id="KW-0479">Metal-binding</keyword>
<keyword id="KW-0539">Nucleus</keyword>
<keyword id="KW-0675">Receptor</keyword>
<keyword id="KW-1185">Reference proteome</keyword>
<keyword id="KW-0678">Repressor</keyword>
<keyword id="KW-0804">Transcription</keyword>
<keyword id="KW-0805">Transcription regulation</keyword>
<keyword id="KW-0862">Zinc</keyword>
<keyword id="KW-0863">Zinc-finger</keyword>
<reference key="1">
    <citation type="journal article" date="1995" name="Development">
        <title>The mouse homolog of the orphan nuclear receptor tailless is expressed in the developing forebrain.</title>
        <authorList>
            <person name="Monaghan A.P."/>
            <person name="Grau E."/>
            <person name="Bock D."/>
            <person name="Schuetz G."/>
        </authorList>
    </citation>
    <scope>NUCLEOTIDE SEQUENCE [MRNA]</scope>
    <scope>TISSUE SPECIFICITY</scope>
    <scope>DEVELOPMENTAL STAGE</scope>
    <source>
        <tissue>Embryo</tissue>
    </source>
</reference>
<reference key="2">
    <citation type="journal article" date="2004" name="Genome Res.">
        <title>The status, quality, and expansion of the NIH full-length cDNA project: the Mammalian Gene Collection (MGC).</title>
        <authorList>
            <consortium name="The MGC Project Team"/>
        </authorList>
    </citation>
    <scope>NUCLEOTIDE SEQUENCE [LARGE SCALE MRNA]</scope>
    <source>
        <strain>C57BL/6J</strain>
        <tissue>Brain</tissue>
    </source>
</reference>
<reference key="3">
    <citation type="journal article" date="2000" name="Proc. Natl. Acad. Sci. U.S.A.">
        <title>The orphan nuclear receptor Tlx regulates Pax2 and is essential for vision.</title>
        <authorList>
            <person name="Yu R.T."/>
            <person name="Chiang M.-Y."/>
            <person name="Tanabe T."/>
            <person name="Kobayashi M."/>
            <person name="Yasuda K."/>
            <person name="Evans R.M."/>
            <person name="Umesono K."/>
        </authorList>
    </citation>
    <scope>FUNCTION</scope>
    <scope>DISRUPTION PHENOTYPE</scope>
</reference>
<reference key="4">
    <citation type="journal article" date="2002" name="Behav. Brain Res.">
        <title>Fierce: a new mouse deletion of Nr2e1; violent behaviour and ocular abnormalities are background-dependent.</title>
        <authorList>
            <person name="Young K.A."/>
            <person name="Berry M.L."/>
            <person name="Mahaffey C.L."/>
            <person name="Saionz J.R."/>
            <person name="Hawes N.L."/>
            <person name="Chang B."/>
            <person name="Zheng Q.Y."/>
            <person name="Smith R.S."/>
            <person name="Bronson R.T."/>
            <person name="Nelson R.J."/>
            <person name="Simpson E.M."/>
        </authorList>
    </citation>
    <scope>DISRUPTION PHENOTYPE</scope>
</reference>
<reference key="5">
    <citation type="journal article" date="2006" name="Genes Dev.">
        <title>Nuclear receptor TLX prevents retinal dystrophy and recruits the corepressor atrophin1.</title>
        <authorList>
            <person name="Zhang C.L."/>
            <person name="Zou Y."/>
            <person name="Yu R.T."/>
            <person name="Gage F.H."/>
            <person name="Evans R.M."/>
        </authorList>
    </citation>
    <scope>FUNCTION</scope>
    <scope>INTERACTION WITH ATN1</scope>
    <scope>DISRUPTION PHENOTYPE</scope>
</reference>
<reference key="6">
    <citation type="journal article" date="2008" name="Mol. Endocrinol.">
        <title>Nuclear receptor TLX regulates cell cycle progression in neural stem cells of the developing brain.</title>
        <authorList>
            <person name="Li W."/>
            <person name="Sun G."/>
            <person name="Yang S."/>
            <person name="Qu Q."/>
            <person name="Nakashima K."/>
            <person name="Shi Y."/>
        </authorList>
    </citation>
    <scope>DISRUPTION PHENOTYPE</scope>
    <scope>SUBCELLULAR LOCATION</scope>
    <scope>DEVELOPMENTAL STAGE</scope>
    <scope>FUNCTION</scope>
</reference>
<gene>
    <name type="primary">Nr2e1</name>
    <name type="synonym">Tll</name>
    <name type="synonym">Tlx</name>
</gene>
<evidence type="ECO:0000250" key="1"/>
<evidence type="ECO:0000255" key="2">
    <source>
        <dbReference type="PROSITE-ProRule" id="PRU00407"/>
    </source>
</evidence>
<evidence type="ECO:0000255" key="3">
    <source>
        <dbReference type="PROSITE-ProRule" id="PRU01189"/>
    </source>
</evidence>
<evidence type="ECO:0000269" key="4">
    <source>
    </source>
</evidence>
<evidence type="ECO:0000269" key="5">
    <source>
    </source>
</evidence>
<evidence type="ECO:0000269" key="6">
    <source>
    </source>
</evidence>
<evidence type="ECO:0000269" key="7">
    <source>
    </source>
</evidence>
<evidence type="ECO:0000269" key="8">
    <source>
    </source>
</evidence>
<evidence type="ECO:0000305" key="9"/>
<name>NR2E1_MOUSE</name>
<sequence length="385" mass="42619">MSKPAGSTSRILDIPCKVCGDRSSGKHYGVYACDGCSGFFKRSIRRNRTYVCKSGNQGGCPVDKTHRNQCRACRLKKCLEVNMNKDAVQHERGPRTSTIRKQVALYFRGHKEDNGAAAHFPSTALPAPAFFTAVTQLEPHGLELAAVSATPERQTLVSLAQPTPKYPHEVNGTPMYLYEVATESVCESAARLLFMSIKWAKSVPAFSTLSLQDQLMLLEDAWRELFVLGIAQWAIPVDANTLLAVSGMNTDNTDSQKLNKIISEIQALQEVVARFRQLRLDATEFACLKCIVTFKAVPTHSGSELRSFRNAAAIAALQDEAQLTLNSYIHTRYPTQPCRFGKLLLLLPALRSISPSTIEEVFFKKTIGNVPITRLLSDMYKSSDI</sequence>